<keyword id="KW-0975">Bacterial flagellum</keyword>
<keyword id="KW-1185">Reference proteome</keyword>
<evidence type="ECO:0000255" key="1">
    <source>
        <dbReference type="HAMAP-Rule" id="MF_00724"/>
    </source>
</evidence>
<sequence length="111" mass="11510">MYDSIMSVSARNALSRLSETVAEKGVGSASAPQAVPAAPGASFGEVLSQMTGSVSQKLQAAEATSIQGIKGDAPVRDVVSSVMEAEQSLQTAIAIRDKIVQAYLEISRMPI</sequence>
<comment type="subcellular location">
    <subcellularLocation>
        <location evidence="1">Bacterial flagellum basal body</location>
    </subcellularLocation>
</comment>
<comment type="similarity">
    <text evidence="1">Belongs to the FliE family.</text>
</comment>
<dbReference type="EMBL" id="CP000873">
    <property type="protein sequence ID" value="ABX63350.1"/>
    <property type="molecule type" value="Genomic_DNA"/>
</dbReference>
<dbReference type="RefSeq" id="WP_002966429.1">
    <property type="nucleotide sequence ID" value="NC_010104.1"/>
</dbReference>
<dbReference type="SMR" id="A9MDR2"/>
<dbReference type="KEGG" id="bcs:BCAN_B0154"/>
<dbReference type="HOGENOM" id="CLU_147249_2_0_5"/>
<dbReference type="PhylomeDB" id="A9MDR2"/>
<dbReference type="Proteomes" id="UP000001385">
    <property type="component" value="Chromosome II"/>
</dbReference>
<dbReference type="GO" id="GO:0009425">
    <property type="term" value="C:bacterial-type flagellum basal body"/>
    <property type="evidence" value="ECO:0007669"/>
    <property type="project" value="UniProtKB-SubCell"/>
</dbReference>
<dbReference type="GO" id="GO:0003774">
    <property type="term" value="F:cytoskeletal motor activity"/>
    <property type="evidence" value="ECO:0007669"/>
    <property type="project" value="InterPro"/>
</dbReference>
<dbReference type="GO" id="GO:0005198">
    <property type="term" value="F:structural molecule activity"/>
    <property type="evidence" value="ECO:0007669"/>
    <property type="project" value="InterPro"/>
</dbReference>
<dbReference type="GO" id="GO:0071973">
    <property type="term" value="P:bacterial-type flagellum-dependent cell motility"/>
    <property type="evidence" value="ECO:0007669"/>
    <property type="project" value="InterPro"/>
</dbReference>
<dbReference type="HAMAP" id="MF_00724">
    <property type="entry name" value="FliE"/>
    <property type="match status" value="1"/>
</dbReference>
<dbReference type="InterPro" id="IPR001624">
    <property type="entry name" value="FliE"/>
</dbReference>
<dbReference type="PANTHER" id="PTHR34653">
    <property type="match status" value="1"/>
</dbReference>
<dbReference type="PANTHER" id="PTHR34653:SF1">
    <property type="entry name" value="FLAGELLAR HOOK-BASAL BODY COMPLEX PROTEIN FLIE"/>
    <property type="match status" value="1"/>
</dbReference>
<dbReference type="Pfam" id="PF02049">
    <property type="entry name" value="FliE"/>
    <property type="match status" value="1"/>
</dbReference>
<dbReference type="PRINTS" id="PR01006">
    <property type="entry name" value="FLGHOOKFLIE"/>
</dbReference>
<protein>
    <recommendedName>
        <fullName evidence="1">Flagellar hook-basal body complex protein FliE</fullName>
    </recommendedName>
</protein>
<organism>
    <name type="scientific">Brucella canis (strain ATCC 23365 / NCTC 10854 / RM-666)</name>
    <dbReference type="NCBI Taxonomy" id="483179"/>
    <lineage>
        <taxon>Bacteria</taxon>
        <taxon>Pseudomonadati</taxon>
        <taxon>Pseudomonadota</taxon>
        <taxon>Alphaproteobacteria</taxon>
        <taxon>Hyphomicrobiales</taxon>
        <taxon>Brucellaceae</taxon>
        <taxon>Brucella/Ochrobactrum group</taxon>
        <taxon>Brucella</taxon>
    </lineage>
</organism>
<feature type="chain" id="PRO_1000083310" description="Flagellar hook-basal body complex protein FliE">
    <location>
        <begin position="1"/>
        <end position="111"/>
    </location>
</feature>
<name>FLIE_BRUC2</name>
<reference key="1">
    <citation type="submission" date="2007-10" db="EMBL/GenBank/DDBJ databases">
        <title>Brucella canis ATCC 23365 whole genome shotgun sequencing project.</title>
        <authorList>
            <person name="Setubal J.C."/>
            <person name="Bowns C."/>
            <person name="Boyle S."/>
            <person name="Crasta O.R."/>
            <person name="Czar M.J."/>
            <person name="Dharmanolla C."/>
            <person name="Gillespie J.J."/>
            <person name="Kenyon R.W."/>
            <person name="Lu J."/>
            <person name="Mane S."/>
            <person name="Mohapatra S."/>
            <person name="Nagrani S."/>
            <person name="Purkayastha A."/>
            <person name="Rajasimha H.K."/>
            <person name="Shallom J.M."/>
            <person name="Shallom S."/>
            <person name="Shukla M."/>
            <person name="Snyder E.E."/>
            <person name="Sobral B.W."/>
            <person name="Wattam A.R."/>
            <person name="Will R."/>
            <person name="Williams K."/>
            <person name="Yoo H."/>
            <person name="Bruce D."/>
            <person name="Detter C."/>
            <person name="Munk C."/>
            <person name="Brettin T.S."/>
        </authorList>
    </citation>
    <scope>NUCLEOTIDE SEQUENCE [LARGE SCALE GENOMIC DNA]</scope>
    <source>
        <strain>ATCC 23365 / NCTC 10854 / RM-666</strain>
    </source>
</reference>
<accession>A9MDR2</accession>
<gene>
    <name evidence="1" type="primary">fliE</name>
    <name type="ordered locus">BCAN_B0154</name>
</gene>
<proteinExistence type="inferred from homology"/>